<sequence length="15" mass="1315">QVIAITGSASGIGAA</sequence>
<accession>P80701</accession>
<proteinExistence type="evidence at protein level"/>
<reference key="1">
    <citation type="journal article" date="1996" name="Eur. J. Biochem.">
        <title>Characterization of a 3 alpha-hydroxysteroid dehydrogenase/carbonyl reductase from the Gram-negative bacterium Comamonas testosteroni.</title>
        <authorList>
            <person name="Oppermann U.C.T."/>
            <person name="Maser E."/>
        </authorList>
    </citation>
    <scope>PROTEIN SEQUENCE</scope>
    <scope>BIOPHYSICOCHEMICAL PROPERTIES</scope>
</reference>
<name>DIDH_PSESP</name>
<protein>
    <recommendedName>
        <fullName>3-alpha-hydroxysteroid dehydrogenase/carbonyl reductase</fullName>
        <shortName>3-alpha-HSD</shortName>
        <ecNumber>1.1.1.50</ecNumber>
    </recommendedName>
    <alternativeName>
        <fullName>3-alpha-hydroxysteroid dehydrogenase/3-oxosteroid reductase</fullName>
    </alternativeName>
    <alternativeName>
        <fullName>HSD29</fullName>
    </alternativeName>
    <alternativeName>
        <fullName>Hydroxyprostaglandin dehydrogenase</fullName>
    </alternativeName>
</protein>
<evidence type="ECO:0000250" key="1"/>
<evidence type="ECO:0000269" key="2">
    <source>
    </source>
</evidence>
<evidence type="ECO:0000305" key="3"/>
<comment type="function">
    <text>Along with the 3 alpha-hydroxysteroid dehydrogenase and 3-oxo-reductase activities towards a variety of cis or trans fused A/B ring steroids, it also reduces several xenobiotic carbonyl compounds, including a metyrapone-based class of insecticides, to the respective alcohol metabolites. No detectable activity on testosterone, progesterone or 3-oxo-desogestrel.</text>
</comment>
<comment type="catalytic activity">
    <reaction>
        <text>a 3alpha-hydroxysteroid + NADP(+) = a 3-oxosteroid + NADPH + H(+)</text>
        <dbReference type="Rhea" id="RHEA:34783"/>
        <dbReference type="ChEBI" id="CHEBI:15378"/>
        <dbReference type="ChEBI" id="CHEBI:36835"/>
        <dbReference type="ChEBI" id="CHEBI:47788"/>
        <dbReference type="ChEBI" id="CHEBI:57783"/>
        <dbReference type="ChEBI" id="CHEBI:58349"/>
        <dbReference type="EC" id="1.1.1.50"/>
    </reaction>
</comment>
<comment type="catalytic activity">
    <reaction>
        <text>a 3alpha-hydroxysteroid + NAD(+) = a 3-oxosteroid + NADH + H(+)</text>
        <dbReference type="Rhea" id="RHEA:34779"/>
        <dbReference type="ChEBI" id="CHEBI:15378"/>
        <dbReference type="ChEBI" id="CHEBI:36835"/>
        <dbReference type="ChEBI" id="CHEBI:47788"/>
        <dbReference type="ChEBI" id="CHEBI:57540"/>
        <dbReference type="ChEBI" id="CHEBI:57945"/>
        <dbReference type="EC" id="1.1.1.50"/>
    </reaction>
</comment>
<comment type="biophysicochemical properties">
    <kinetics>
        <KM evidence="2">26.7 uM for androsterone</KM>
        <KM evidence="2">6.8 uM for fusidic acid</KM>
        <KM evidence="2">630 uM for metyrapone</KM>
        <Vmax evidence="2">5.5 umol/min/mg enzyme for androsterone</Vmax>
        <Vmax evidence="2">11.3 umol/min/mg enzyme fusidic acid</Vmax>
        <Vmax evidence="2">0.6 umol/min/mg enzyme metyrapone</Vmax>
    </kinetics>
</comment>
<comment type="subcellular location">
    <subcellularLocation>
        <location evidence="1">Cytoplasm</location>
    </subcellularLocation>
</comment>
<comment type="similarity">
    <text evidence="3">Belongs to the short-chain dehydrogenases/reductases (SDR) family.</text>
</comment>
<feature type="chain" id="PRO_0000054657" description="3-alpha-hydroxysteroid dehydrogenase/carbonyl reductase">
    <location>
        <begin position="1"/>
        <end position="15" status="greater than"/>
    </location>
</feature>
<feature type="region of interest" description="Involved in cofactor binding" evidence="1">
    <location>
        <begin position="6"/>
        <end position="15" status="greater than"/>
    </location>
</feature>
<feature type="non-terminal residue">
    <location>
        <position position="15"/>
    </location>
</feature>
<organism>
    <name type="scientific">Pseudomonas sp</name>
    <dbReference type="NCBI Taxonomy" id="306"/>
    <lineage>
        <taxon>Bacteria</taxon>
        <taxon>Pseudomonadati</taxon>
        <taxon>Pseudomonadota</taxon>
        <taxon>Gammaproteobacteria</taxon>
        <taxon>Pseudomonadales</taxon>
        <taxon>Pseudomonadaceae</taxon>
        <taxon>Pseudomonas</taxon>
    </lineage>
</organism>
<keyword id="KW-0963">Cytoplasm</keyword>
<keyword id="KW-0903">Direct protein sequencing</keyword>
<keyword id="KW-0520">NAD</keyword>
<keyword id="KW-0560">Oxidoreductase</keyword>
<dbReference type="EC" id="1.1.1.50"/>
<dbReference type="BRENDA" id="1.1.1.357">
    <property type="organism ID" value="5085"/>
</dbReference>
<dbReference type="SABIO-RK" id="P80701"/>
<dbReference type="GO" id="GO:0005737">
    <property type="term" value="C:cytoplasm"/>
    <property type="evidence" value="ECO:0007669"/>
    <property type="project" value="UniProtKB-SubCell"/>
</dbReference>
<dbReference type="GO" id="GO:0047042">
    <property type="term" value="F:androsterone dehydrogenase (B-specific) activity"/>
    <property type="evidence" value="ECO:0007669"/>
    <property type="project" value="UniProtKB-EC"/>
</dbReference>